<feature type="chain" id="PRO_1000063666" description="UPF0213 protein ESA_03545">
    <location>
        <begin position="1"/>
        <end position="95"/>
    </location>
</feature>
<feature type="domain" description="GIY-YIG" evidence="1">
    <location>
        <begin position="2"/>
        <end position="77"/>
    </location>
</feature>
<gene>
    <name type="ordered locus">ESA_03545</name>
</gene>
<reference key="1">
    <citation type="journal article" date="2010" name="PLoS ONE">
        <title>Genome sequence of Cronobacter sakazakii BAA-894 and comparative genomic hybridization analysis with other Cronobacter species.</title>
        <authorList>
            <person name="Kucerova E."/>
            <person name="Clifton S.W."/>
            <person name="Xia X.Q."/>
            <person name="Long F."/>
            <person name="Porwollik S."/>
            <person name="Fulton L."/>
            <person name="Fronick C."/>
            <person name="Minx P."/>
            <person name="Kyung K."/>
            <person name="Warren W."/>
            <person name="Fulton R."/>
            <person name="Feng D."/>
            <person name="Wollam A."/>
            <person name="Shah N."/>
            <person name="Bhonagiri V."/>
            <person name="Nash W.E."/>
            <person name="Hallsworth-Pepin K."/>
            <person name="Wilson R.K."/>
            <person name="McClelland M."/>
            <person name="Forsythe S.J."/>
        </authorList>
    </citation>
    <scope>NUCLEOTIDE SEQUENCE [LARGE SCALE GENOMIC DNA]</scope>
    <source>
        <strain>ATCC BAA-894</strain>
    </source>
</reference>
<dbReference type="EMBL" id="CP000783">
    <property type="protein sequence ID" value="ABU78759.1"/>
    <property type="molecule type" value="Genomic_DNA"/>
</dbReference>
<dbReference type="RefSeq" id="WP_012125950.1">
    <property type="nucleotide sequence ID" value="NC_009778.1"/>
</dbReference>
<dbReference type="SMR" id="A7MIP1"/>
<dbReference type="KEGG" id="esa:ESA_03545"/>
<dbReference type="PATRIC" id="fig|290339.8.peg.3156"/>
<dbReference type="HOGENOM" id="CLU_135650_0_1_6"/>
<dbReference type="Proteomes" id="UP000000260">
    <property type="component" value="Chromosome"/>
</dbReference>
<dbReference type="CDD" id="cd10456">
    <property type="entry name" value="GIY-YIG_UPF0213"/>
    <property type="match status" value="1"/>
</dbReference>
<dbReference type="Gene3D" id="3.40.1440.10">
    <property type="entry name" value="GIY-YIG endonuclease"/>
    <property type="match status" value="1"/>
</dbReference>
<dbReference type="HAMAP" id="MF_01029">
    <property type="entry name" value="UPF0213"/>
    <property type="match status" value="1"/>
</dbReference>
<dbReference type="InterPro" id="IPR000305">
    <property type="entry name" value="GIY-YIG_endonuc"/>
</dbReference>
<dbReference type="InterPro" id="IPR035901">
    <property type="entry name" value="GIY-YIG_endonuc_sf"/>
</dbReference>
<dbReference type="InterPro" id="IPR050190">
    <property type="entry name" value="UPF0213_domain"/>
</dbReference>
<dbReference type="InterPro" id="IPR022992">
    <property type="entry name" value="UPF0213_GIY-YIG_endonuc"/>
</dbReference>
<dbReference type="PANTHER" id="PTHR34477">
    <property type="entry name" value="UPF0213 PROTEIN YHBQ"/>
    <property type="match status" value="1"/>
</dbReference>
<dbReference type="PANTHER" id="PTHR34477:SF1">
    <property type="entry name" value="UPF0213 PROTEIN YHBQ"/>
    <property type="match status" value="1"/>
</dbReference>
<dbReference type="Pfam" id="PF01541">
    <property type="entry name" value="GIY-YIG"/>
    <property type="match status" value="1"/>
</dbReference>
<dbReference type="SMART" id="SM00465">
    <property type="entry name" value="GIYc"/>
    <property type="match status" value="1"/>
</dbReference>
<dbReference type="SUPFAM" id="SSF82771">
    <property type="entry name" value="GIY-YIG endonuclease"/>
    <property type="match status" value="1"/>
</dbReference>
<dbReference type="PROSITE" id="PS50164">
    <property type="entry name" value="GIY_YIG"/>
    <property type="match status" value="1"/>
</dbReference>
<sequence>MEEWFLYLIRCPDNRLYTGITTDVARRFAQHQRGKGAKALRGKGELTLVFSAPAGSRSEALRAEYRIKQLTKRQKEQLVAGELAFEAMKSAPQTP</sequence>
<proteinExistence type="inferred from homology"/>
<organism>
    <name type="scientific">Cronobacter sakazakii (strain ATCC BAA-894)</name>
    <name type="common">Enterobacter sakazakii</name>
    <dbReference type="NCBI Taxonomy" id="290339"/>
    <lineage>
        <taxon>Bacteria</taxon>
        <taxon>Pseudomonadati</taxon>
        <taxon>Pseudomonadota</taxon>
        <taxon>Gammaproteobacteria</taxon>
        <taxon>Enterobacterales</taxon>
        <taxon>Enterobacteriaceae</taxon>
        <taxon>Cronobacter</taxon>
    </lineage>
</organism>
<evidence type="ECO:0000255" key="1">
    <source>
        <dbReference type="HAMAP-Rule" id="MF_01029"/>
    </source>
</evidence>
<accession>A7MIP1</accession>
<protein>
    <recommendedName>
        <fullName evidence="1">UPF0213 protein ESA_03545</fullName>
    </recommendedName>
</protein>
<name>Y3545_CROS8</name>
<comment type="similarity">
    <text evidence="1">Belongs to the UPF0213 family.</text>
</comment>
<keyword id="KW-1185">Reference proteome</keyword>